<protein>
    <recommendedName>
        <fullName evidence="1">Sugar fermentation stimulation protein homolog</fullName>
    </recommendedName>
</protein>
<gene>
    <name evidence="1" type="primary">sfsA</name>
    <name type="ordered locus">BH08360</name>
</gene>
<dbReference type="EMBL" id="BX897699">
    <property type="protein sequence ID" value="CAF27635.1"/>
    <property type="molecule type" value="Genomic_DNA"/>
</dbReference>
<dbReference type="RefSeq" id="WP_011180731.1">
    <property type="nucleotide sequence ID" value="NZ_LRIJ02000001.1"/>
</dbReference>
<dbReference type="SMR" id="Q6G3D7"/>
<dbReference type="PaxDb" id="283166-BH08360"/>
<dbReference type="EnsemblBacteria" id="CAF27635">
    <property type="protein sequence ID" value="CAF27635"/>
    <property type="gene ID" value="BH08360"/>
</dbReference>
<dbReference type="GeneID" id="92985500"/>
<dbReference type="KEGG" id="bhe:BH08360"/>
<dbReference type="eggNOG" id="COG1489">
    <property type="taxonomic scope" value="Bacteria"/>
</dbReference>
<dbReference type="OrthoDB" id="9802365at2"/>
<dbReference type="Proteomes" id="UP000000421">
    <property type="component" value="Chromosome"/>
</dbReference>
<dbReference type="GO" id="GO:0003677">
    <property type="term" value="F:DNA binding"/>
    <property type="evidence" value="ECO:0007669"/>
    <property type="project" value="InterPro"/>
</dbReference>
<dbReference type="CDD" id="cd22359">
    <property type="entry name" value="SfsA-like_bacterial"/>
    <property type="match status" value="1"/>
</dbReference>
<dbReference type="Gene3D" id="2.40.50.580">
    <property type="match status" value="1"/>
</dbReference>
<dbReference type="Gene3D" id="3.40.1350.60">
    <property type="match status" value="1"/>
</dbReference>
<dbReference type="HAMAP" id="MF_00095">
    <property type="entry name" value="SfsA"/>
    <property type="match status" value="1"/>
</dbReference>
<dbReference type="InterPro" id="IPR005224">
    <property type="entry name" value="SfsA"/>
</dbReference>
<dbReference type="InterPro" id="IPR040452">
    <property type="entry name" value="SfsA_C"/>
</dbReference>
<dbReference type="InterPro" id="IPR041465">
    <property type="entry name" value="SfsA_N"/>
</dbReference>
<dbReference type="NCBIfam" id="TIGR00230">
    <property type="entry name" value="sfsA"/>
    <property type="match status" value="1"/>
</dbReference>
<dbReference type="PANTHER" id="PTHR30545">
    <property type="entry name" value="SUGAR FERMENTATION STIMULATION PROTEIN A"/>
    <property type="match status" value="1"/>
</dbReference>
<dbReference type="PANTHER" id="PTHR30545:SF2">
    <property type="entry name" value="SUGAR FERMENTATION STIMULATION PROTEIN A"/>
    <property type="match status" value="1"/>
</dbReference>
<dbReference type="Pfam" id="PF03749">
    <property type="entry name" value="SfsA"/>
    <property type="match status" value="1"/>
</dbReference>
<dbReference type="Pfam" id="PF17746">
    <property type="entry name" value="SfsA_N"/>
    <property type="match status" value="1"/>
</dbReference>
<evidence type="ECO:0000255" key="1">
    <source>
        <dbReference type="HAMAP-Rule" id="MF_00095"/>
    </source>
</evidence>
<comment type="similarity">
    <text evidence="1">Belongs to the SfsA family.</text>
</comment>
<organism>
    <name type="scientific">Bartonella henselae (strain ATCC 49882 / DSM 28221 / CCUG 30454 / Houston 1)</name>
    <name type="common">Rochalimaea henselae</name>
    <dbReference type="NCBI Taxonomy" id="283166"/>
    <lineage>
        <taxon>Bacteria</taxon>
        <taxon>Pseudomonadati</taxon>
        <taxon>Pseudomonadota</taxon>
        <taxon>Alphaproteobacteria</taxon>
        <taxon>Hyphomicrobiales</taxon>
        <taxon>Bartonellaceae</taxon>
        <taxon>Bartonella</taxon>
    </lineage>
</organism>
<proteinExistence type="inferred from homology"/>
<name>SFSA_BARHE</name>
<feature type="chain" id="PRO_0000152271" description="Sugar fermentation stimulation protein homolog">
    <location>
        <begin position="1"/>
        <end position="235"/>
    </location>
</feature>
<reference key="1">
    <citation type="journal article" date="2004" name="Proc. Natl. Acad. Sci. U.S.A.">
        <title>The louse-borne human pathogen Bartonella quintana is a genomic derivative of the zoonotic agent Bartonella henselae.</title>
        <authorList>
            <person name="Alsmark U.C.M."/>
            <person name="Frank A.C."/>
            <person name="Karlberg E.O."/>
            <person name="Legault B.-A."/>
            <person name="Ardell D.H."/>
            <person name="Canbaeck B."/>
            <person name="Eriksson A.-S."/>
            <person name="Naeslund A.K."/>
            <person name="Handley S.A."/>
            <person name="Huvet M."/>
            <person name="La Scola B."/>
            <person name="Holmberg M."/>
            <person name="Andersson S.G.E."/>
        </authorList>
    </citation>
    <scope>NUCLEOTIDE SEQUENCE [LARGE SCALE GENOMIC DNA]</scope>
    <source>
        <strain>ATCC 49882 / DSM 28221 / CCUG 30454 / Houston 1</strain>
    </source>
</reference>
<accession>Q6G3D7</accession>
<sequence>MFFIHKLFPAKLIRRYKRFLADVKREDQHIFTVSVPNTGSMLGLTTPNSNIWLSYHNNPKRRYAYQLEIVEANNTLVGINTTLPNKLALEAIQNNLLPELNGYKTILKEQRYGIQSRIDFLLRDDILPDCYLEIKNVHFIRQKGLAEFPDTETKRGTRHLEELIKIVQQGKRAVMLYIIQREDCSAFTICRDLDPTYGRKFDLALESGVEFYAIKCQVSVEGIFPIQQVKIENRK</sequence>